<accession>Q62F24</accession>
<gene>
    <name evidence="1" type="primary">dctA</name>
    <name type="ordered locus">BMA3228</name>
</gene>
<proteinExistence type="inferred from homology"/>
<sequence>MKKPFYKVLYVQVIFAIVVGVILGHYYPSLAVDMKPLGDGFIKLIKMVIGPIIFCTVVTGIAGMQDMKKVGRVGGKALLYFEIVSTCALVLGLAATHILRPGVGFNIDPATLNGKEVASYAAKAHGQSSVDFLMHIIPNTMIDAFAQGEILQILLIALLFGSVLAHLGERGRVVTDFIDGITRVLFGIVHIVTKLAPIGAFGAMAFTIGKYGVGSLVPLLKLIGTFYLTSVVFVLVVLGAIARFTGFSIIRFVGYIKEELLIVLGTSSSEAALPQLMEKLEKAGCSRSVVGLVVPTGYLFNLDGTNIYMTMAVLFIAQATNIELTWMQQLTLLAVAMLTSKGASGVTGAGFITLAATLAVVPTIPLSGMVLILGIDRFMSECRALTNIVGNGVATVVVSAWEKELDRAKLRAALSGNGEAAAGEAARV</sequence>
<reference key="1">
    <citation type="journal article" date="2004" name="Proc. Natl. Acad. Sci. U.S.A.">
        <title>Structural flexibility in the Burkholderia mallei genome.</title>
        <authorList>
            <person name="Nierman W.C."/>
            <person name="DeShazer D."/>
            <person name="Kim H.S."/>
            <person name="Tettelin H."/>
            <person name="Nelson K.E."/>
            <person name="Feldblyum T.V."/>
            <person name="Ulrich R.L."/>
            <person name="Ronning C.M."/>
            <person name="Brinkac L.M."/>
            <person name="Daugherty S.C."/>
            <person name="Davidsen T.D."/>
            <person name="DeBoy R.T."/>
            <person name="Dimitrov G."/>
            <person name="Dodson R.J."/>
            <person name="Durkin A.S."/>
            <person name="Gwinn M.L."/>
            <person name="Haft D.H."/>
            <person name="Khouri H.M."/>
            <person name="Kolonay J.F."/>
            <person name="Madupu R."/>
            <person name="Mohammoud Y."/>
            <person name="Nelson W.C."/>
            <person name="Radune D."/>
            <person name="Romero C.M."/>
            <person name="Sarria S."/>
            <person name="Selengut J."/>
            <person name="Shamblin C."/>
            <person name="Sullivan S.A."/>
            <person name="White O."/>
            <person name="Yu Y."/>
            <person name="Zafar N."/>
            <person name="Zhou L."/>
            <person name="Fraser C.M."/>
        </authorList>
    </citation>
    <scope>NUCLEOTIDE SEQUENCE [LARGE SCALE GENOMIC DNA]</scope>
    <source>
        <strain>ATCC 23344</strain>
    </source>
</reference>
<comment type="function">
    <text evidence="1">Responsible for the transport of dicarboxylates such as succinate, fumarate, and malate from the periplasm across the membrane.</text>
</comment>
<comment type="subcellular location">
    <subcellularLocation>
        <location evidence="1">Cell inner membrane</location>
        <topology evidence="1">Multi-pass membrane protein</topology>
    </subcellularLocation>
</comment>
<comment type="similarity">
    <text evidence="1">Belongs to the dicarboxylate/amino acid:cation symporter (DAACS) (TC 2.A.23) family.</text>
</comment>
<organism>
    <name type="scientific">Burkholderia mallei (strain ATCC 23344)</name>
    <dbReference type="NCBI Taxonomy" id="243160"/>
    <lineage>
        <taxon>Bacteria</taxon>
        <taxon>Pseudomonadati</taxon>
        <taxon>Pseudomonadota</taxon>
        <taxon>Betaproteobacteria</taxon>
        <taxon>Burkholderiales</taxon>
        <taxon>Burkholderiaceae</taxon>
        <taxon>Burkholderia</taxon>
        <taxon>pseudomallei group</taxon>
    </lineage>
</organism>
<evidence type="ECO:0000255" key="1">
    <source>
        <dbReference type="HAMAP-Rule" id="MF_01300"/>
    </source>
</evidence>
<feature type="chain" id="PRO_1000067436" description="C4-dicarboxylate transport protein">
    <location>
        <begin position="1"/>
        <end position="428"/>
    </location>
</feature>
<feature type="transmembrane region" description="Helical" evidence="1">
    <location>
        <begin position="8"/>
        <end position="28"/>
    </location>
</feature>
<feature type="transmembrane region" description="Helical" evidence="1">
    <location>
        <begin position="44"/>
        <end position="64"/>
    </location>
</feature>
<feature type="transmembrane region" description="Helical" evidence="1">
    <location>
        <begin position="78"/>
        <end position="98"/>
    </location>
</feature>
<feature type="transmembrane region" description="Helical" evidence="1">
    <location>
        <begin position="148"/>
        <end position="168"/>
    </location>
</feature>
<feature type="transmembrane region" description="Helical" evidence="1">
    <location>
        <begin position="184"/>
        <end position="204"/>
    </location>
</feature>
<feature type="transmembrane region" description="Helical" evidence="1">
    <location>
        <begin position="222"/>
        <end position="242"/>
    </location>
</feature>
<feature type="transmembrane region" description="Helical" evidence="1">
    <location>
        <begin position="307"/>
        <end position="327"/>
    </location>
</feature>
<feature type="transmembrane region" description="Helical" evidence="1">
    <location>
        <begin position="355"/>
        <end position="375"/>
    </location>
</feature>
<protein>
    <recommendedName>
        <fullName evidence="1">C4-dicarboxylate transport protein</fullName>
    </recommendedName>
</protein>
<name>DCTA_BURMA</name>
<keyword id="KW-0997">Cell inner membrane</keyword>
<keyword id="KW-1003">Cell membrane</keyword>
<keyword id="KW-0472">Membrane</keyword>
<keyword id="KW-1185">Reference proteome</keyword>
<keyword id="KW-0769">Symport</keyword>
<keyword id="KW-0812">Transmembrane</keyword>
<keyword id="KW-1133">Transmembrane helix</keyword>
<keyword id="KW-0813">Transport</keyword>
<dbReference type="EMBL" id="CP000010">
    <property type="protein sequence ID" value="AAU48351.1"/>
    <property type="molecule type" value="Genomic_DNA"/>
</dbReference>
<dbReference type="RefSeq" id="WP_004198288.1">
    <property type="nucleotide sequence ID" value="NC_006348.1"/>
</dbReference>
<dbReference type="RefSeq" id="YP_104703.1">
    <property type="nucleotide sequence ID" value="NC_006348.1"/>
</dbReference>
<dbReference type="SMR" id="Q62F24"/>
<dbReference type="KEGG" id="bma:BMA3228"/>
<dbReference type="PATRIC" id="fig|243160.12.peg.3307"/>
<dbReference type="eggNOG" id="COG1301">
    <property type="taxonomic scope" value="Bacteria"/>
</dbReference>
<dbReference type="HOGENOM" id="CLU_019375_7_0_4"/>
<dbReference type="Proteomes" id="UP000006693">
    <property type="component" value="Chromosome 1"/>
</dbReference>
<dbReference type="GO" id="GO:0005886">
    <property type="term" value="C:plasma membrane"/>
    <property type="evidence" value="ECO:0007669"/>
    <property type="project" value="UniProtKB-SubCell"/>
</dbReference>
<dbReference type="GO" id="GO:0015138">
    <property type="term" value="F:fumarate transmembrane transporter activity"/>
    <property type="evidence" value="ECO:0007669"/>
    <property type="project" value="TreeGrafter"/>
</dbReference>
<dbReference type="GO" id="GO:0015366">
    <property type="term" value="F:malate:proton symporter activity"/>
    <property type="evidence" value="ECO:0007669"/>
    <property type="project" value="TreeGrafter"/>
</dbReference>
<dbReference type="GO" id="GO:0015141">
    <property type="term" value="F:succinate transmembrane transporter activity"/>
    <property type="evidence" value="ECO:0007669"/>
    <property type="project" value="TreeGrafter"/>
</dbReference>
<dbReference type="GO" id="GO:0070778">
    <property type="term" value="P:L-aspartate transmembrane transport"/>
    <property type="evidence" value="ECO:0007669"/>
    <property type="project" value="TreeGrafter"/>
</dbReference>
<dbReference type="FunFam" id="1.10.3860.10:FF:000001">
    <property type="entry name" value="C4-dicarboxylate transport protein"/>
    <property type="match status" value="1"/>
</dbReference>
<dbReference type="Gene3D" id="1.10.3860.10">
    <property type="entry name" value="Sodium:dicarboxylate symporter"/>
    <property type="match status" value="1"/>
</dbReference>
<dbReference type="HAMAP" id="MF_01300">
    <property type="entry name" value="C4_dicarb_transport"/>
    <property type="match status" value="1"/>
</dbReference>
<dbReference type="InterPro" id="IPR023954">
    <property type="entry name" value="C4_dicarb_transport"/>
</dbReference>
<dbReference type="InterPro" id="IPR001991">
    <property type="entry name" value="Na-dicarboxylate_symporter"/>
</dbReference>
<dbReference type="InterPro" id="IPR018107">
    <property type="entry name" value="Na-dicarboxylate_symporter_CS"/>
</dbReference>
<dbReference type="InterPro" id="IPR036458">
    <property type="entry name" value="Na:dicarbo_symporter_sf"/>
</dbReference>
<dbReference type="NCBIfam" id="NF002461">
    <property type="entry name" value="PRK01663.1"/>
    <property type="match status" value="1"/>
</dbReference>
<dbReference type="NCBIfam" id="NF009587">
    <property type="entry name" value="PRK13027.1"/>
    <property type="match status" value="1"/>
</dbReference>
<dbReference type="PANTHER" id="PTHR42865:SF1">
    <property type="entry name" value="AEROBIC C4-DICARBOXYLATE TRANSPORT PROTEIN"/>
    <property type="match status" value="1"/>
</dbReference>
<dbReference type="PANTHER" id="PTHR42865">
    <property type="entry name" value="PROTON/GLUTAMATE-ASPARTATE SYMPORTER"/>
    <property type="match status" value="1"/>
</dbReference>
<dbReference type="Pfam" id="PF00375">
    <property type="entry name" value="SDF"/>
    <property type="match status" value="1"/>
</dbReference>
<dbReference type="PRINTS" id="PR00173">
    <property type="entry name" value="EDTRNSPORT"/>
</dbReference>
<dbReference type="SUPFAM" id="SSF118215">
    <property type="entry name" value="Proton glutamate symport protein"/>
    <property type="match status" value="1"/>
</dbReference>
<dbReference type="PROSITE" id="PS00713">
    <property type="entry name" value="NA_DICARBOXYL_SYMP_1"/>
    <property type="match status" value="1"/>
</dbReference>